<organism>
    <name type="scientific">Salmonella dublin (strain CT_02021853)</name>
    <dbReference type="NCBI Taxonomy" id="439851"/>
    <lineage>
        <taxon>Bacteria</taxon>
        <taxon>Pseudomonadati</taxon>
        <taxon>Pseudomonadota</taxon>
        <taxon>Gammaproteobacteria</taxon>
        <taxon>Enterobacterales</taxon>
        <taxon>Enterobacteriaceae</taxon>
        <taxon>Salmonella</taxon>
    </lineage>
</organism>
<evidence type="ECO:0000255" key="1">
    <source>
        <dbReference type="HAMAP-Rule" id="MF_00446"/>
    </source>
</evidence>
<name>PAND_SALDC</name>
<proteinExistence type="inferred from homology"/>
<accession>B5FIX6</accession>
<feature type="chain" id="PRO_1000192025" description="Aspartate 1-decarboxylase beta chain" evidence="1">
    <location>
        <begin position="1"/>
        <end position="24"/>
    </location>
</feature>
<feature type="chain" id="PRO_1000192026" description="Aspartate 1-decarboxylase alpha chain" evidence="1">
    <location>
        <begin position="25"/>
        <end position="126"/>
    </location>
</feature>
<feature type="active site" description="Schiff-base intermediate with substrate; via pyruvic acid" evidence="1">
    <location>
        <position position="25"/>
    </location>
</feature>
<feature type="active site" description="Proton donor" evidence="1">
    <location>
        <position position="58"/>
    </location>
</feature>
<feature type="binding site" evidence="1">
    <location>
        <position position="57"/>
    </location>
    <ligand>
        <name>substrate</name>
    </ligand>
</feature>
<feature type="binding site" evidence="1">
    <location>
        <begin position="73"/>
        <end position="75"/>
    </location>
    <ligand>
        <name>substrate</name>
    </ligand>
</feature>
<feature type="modified residue" description="Pyruvic acid (Ser)" evidence="1">
    <location>
        <position position="25"/>
    </location>
</feature>
<comment type="function">
    <text evidence="1">Catalyzes the pyruvoyl-dependent decarboxylation of aspartate to produce beta-alanine.</text>
</comment>
<comment type="catalytic activity">
    <reaction evidence="1">
        <text>L-aspartate + H(+) = beta-alanine + CO2</text>
        <dbReference type="Rhea" id="RHEA:19497"/>
        <dbReference type="ChEBI" id="CHEBI:15378"/>
        <dbReference type="ChEBI" id="CHEBI:16526"/>
        <dbReference type="ChEBI" id="CHEBI:29991"/>
        <dbReference type="ChEBI" id="CHEBI:57966"/>
        <dbReference type="EC" id="4.1.1.11"/>
    </reaction>
</comment>
<comment type="cofactor">
    <cofactor evidence="1">
        <name>pyruvate</name>
        <dbReference type="ChEBI" id="CHEBI:15361"/>
    </cofactor>
    <text evidence="1">Binds 1 pyruvoyl group covalently per subunit.</text>
</comment>
<comment type="pathway">
    <text evidence="1">Cofactor biosynthesis; (R)-pantothenate biosynthesis; beta-alanine from L-aspartate: step 1/1.</text>
</comment>
<comment type="subunit">
    <text evidence="1">Heterooctamer of four alpha and four beta subunits.</text>
</comment>
<comment type="subcellular location">
    <subcellularLocation>
        <location evidence="1">Cytoplasm</location>
    </subcellularLocation>
</comment>
<comment type="PTM">
    <text evidence="1">Is synthesized initially as an inactive proenzyme, which is activated by self-cleavage at a specific serine bond to produce a beta-subunit with a hydroxyl group at its C-terminus and an alpha-subunit with a pyruvoyl group at its N-terminus.</text>
</comment>
<comment type="similarity">
    <text evidence="1">Belongs to the PanD family.</text>
</comment>
<sequence length="126" mass="13818">MIRTMLQGKLHRVKVTQADLHYEGSCAIDQDFLDASGILENEAIDIWNVTNGKRFSTYAIAAERGSRIISVNGAAAHCAEVGDIVIIASFVTMSDEEARTWSPKVAYFEGDNEMKRTAKAIPVQVA</sequence>
<gene>
    <name evidence="1" type="primary">panD</name>
    <name type="ordered locus">SeD_A0196</name>
</gene>
<keyword id="KW-0068">Autocatalytic cleavage</keyword>
<keyword id="KW-0963">Cytoplasm</keyword>
<keyword id="KW-0210">Decarboxylase</keyword>
<keyword id="KW-0456">Lyase</keyword>
<keyword id="KW-0566">Pantothenate biosynthesis</keyword>
<keyword id="KW-0670">Pyruvate</keyword>
<keyword id="KW-0704">Schiff base</keyword>
<keyword id="KW-0865">Zymogen</keyword>
<dbReference type="EC" id="4.1.1.11" evidence="1"/>
<dbReference type="EMBL" id="CP001144">
    <property type="protein sequence ID" value="ACH74559.1"/>
    <property type="molecule type" value="Genomic_DNA"/>
</dbReference>
<dbReference type="RefSeq" id="WP_000621527.1">
    <property type="nucleotide sequence ID" value="NC_011205.1"/>
</dbReference>
<dbReference type="SMR" id="B5FIX6"/>
<dbReference type="KEGG" id="sed:SeD_A0196"/>
<dbReference type="HOGENOM" id="CLU_115305_2_1_6"/>
<dbReference type="UniPathway" id="UPA00028">
    <property type="reaction ID" value="UER00002"/>
</dbReference>
<dbReference type="Proteomes" id="UP000008322">
    <property type="component" value="Chromosome"/>
</dbReference>
<dbReference type="GO" id="GO:0005829">
    <property type="term" value="C:cytosol"/>
    <property type="evidence" value="ECO:0007669"/>
    <property type="project" value="TreeGrafter"/>
</dbReference>
<dbReference type="GO" id="GO:0004068">
    <property type="term" value="F:aspartate 1-decarboxylase activity"/>
    <property type="evidence" value="ECO:0007669"/>
    <property type="project" value="UniProtKB-UniRule"/>
</dbReference>
<dbReference type="GO" id="GO:0006523">
    <property type="term" value="P:alanine biosynthetic process"/>
    <property type="evidence" value="ECO:0007669"/>
    <property type="project" value="InterPro"/>
</dbReference>
<dbReference type="GO" id="GO:0015940">
    <property type="term" value="P:pantothenate biosynthetic process"/>
    <property type="evidence" value="ECO:0007669"/>
    <property type="project" value="UniProtKB-UniRule"/>
</dbReference>
<dbReference type="CDD" id="cd06919">
    <property type="entry name" value="Asp_decarbox"/>
    <property type="match status" value="1"/>
</dbReference>
<dbReference type="FunFam" id="2.40.40.20:FF:000004">
    <property type="entry name" value="Aspartate 1-decarboxylase"/>
    <property type="match status" value="1"/>
</dbReference>
<dbReference type="Gene3D" id="2.40.40.20">
    <property type="match status" value="1"/>
</dbReference>
<dbReference type="HAMAP" id="MF_00446">
    <property type="entry name" value="PanD"/>
    <property type="match status" value="1"/>
</dbReference>
<dbReference type="InterPro" id="IPR009010">
    <property type="entry name" value="Asp_de-COase-like_dom_sf"/>
</dbReference>
<dbReference type="InterPro" id="IPR003190">
    <property type="entry name" value="Asp_decarbox"/>
</dbReference>
<dbReference type="NCBIfam" id="TIGR00223">
    <property type="entry name" value="panD"/>
    <property type="match status" value="1"/>
</dbReference>
<dbReference type="PANTHER" id="PTHR21012">
    <property type="entry name" value="ASPARTATE 1-DECARBOXYLASE"/>
    <property type="match status" value="1"/>
</dbReference>
<dbReference type="PANTHER" id="PTHR21012:SF0">
    <property type="entry name" value="ASPARTATE 1-DECARBOXYLASE"/>
    <property type="match status" value="1"/>
</dbReference>
<dbReference type="Pfam" id="PF02261">
    <property type="entry name" value="Asp_decarbox"/>
    <property type="match status" value="1"/>
</dbReference>
<dbReference type="PIRSF" id="PIRSF006246">
    <property type="entry name" value="Asp_decarbox"/>
    <property type="match status" value="1"/>
</dbReference>
<dbReference type="SUPFAM" id="SSF50692">
    <property type="entry name" value="ADC-like"/>
    <property type="match status" value="1"/>
</dbReference>
<reference key="1">
    <citation type="journal article" date="2011" name="J. Bacteriol.">
        <title>Comparative genomics of 28 Salmonella enterica isolates: evidence for CRISPR-mediated adaptive sublineage evolution.</title>
        <authorList>
            <person name="Fricke W.F."/>
            <person name="Mammel M.K."/>
            <person name="McDermott P.F."/>
            <person name="Tartera C."/>
            <person name="White D.G."/>
            <person name="Leclerc J.E."/>
            <person name="Ravel J."/>
            <person name="Cebula T.A."/>
        </authorList>
    </citation>
    <scope>NUCLEOTIDE SEQUENCE [LARGE SCALE GENOMIC DNA]</scope>
    <source>
        <strain>CT_02021853</strain>
    </source>
</reference>
<protein>
    <recommendedName>
        <fullName evidence="1">Aspartate 1-decarboxylase</fullName>
        <ecNumber evidence="1">4.1.1.11</ecNumber>
    </recommendedName>
    <alternativeName>
        <fullName evidence="1">Aspartate alpha-decarboxylase</fullName>
    </alternativeName>
    <component>
        <recommendedName>
            <fullName evidence="1">Aspartate 1-decarboxylase beta chain</fullName>
        </recommendedName>
    </component>
    <component>
        <recommendedName>
            <fullName evidence="1">Aspartate 1-decarboxylase alpha chain</fullName>
        </recommendedName>
    </component>
</protein>